<dbReference type="EC" id="5.1.1.7" evidence="1"/>
<dbReference type="EMBL" id="AL646052">
    <property type="protein sequence ID" value="CAD13665.1"/>
    <property type="molecule type" value="Genomic_DNA"/>
</dbReference>
<dbReference type="RefSeq" id="WP_011000104.1">
    <property type="nucleotide sequence ID" value="NC_003295.1"/>
</dbReference>
<dbReference type="SMR" id="Q8Y344"/>
<dbReference type="STRING" id="267608.RSc0137"/>
<dbReference type="EnsemblBacteria" id="CAD13665">
    <property type="protein sequence ID" value="CAD13665"/>
    <property type="gene ID" value="RSc0137"/>
</dbReference>
<dbReference type="KEGG" id="rso:RSc0137"/>
<dbReference type="PATRIC" id="fig|267608.8.peg.140"/>
<dbReference type="eggNOG" id="COG0253">
    <property type="taxonomic scope" value="Bacteria"/>
</dbReference>
<dbReference type="HOGENOM" id="CLU_053306_1_1_4"/>
<dbReference type="UniPathway" id="UPA00034">
    <property type="reaction ID" value="UER00025"/>
</dbReference>
<dbReference type="Proteomes" id="UP000001436">
    <property type="component" value="Chromosome"/>
</dbReference>
<dbReference type="GO" id="GO:0005829">
    <property type="term" value="C:cytosol"/>
    <property type="evidence" value="ECO:0007669"/>
    <property type="project" value="TreeGrafter"/>
</dbReference>
<dbReference type="GO" id="GO:0008837">
    <property type="term" value="F:diaminopimelate epimerase activity"/>
    <property type="evidence" value="ECO:0007669"/>
    <property type="project" value="UniProtKB-UniRule"/>
</dbReference>
<dbReference type="GO" id="GO:0009089">
    <property type="term" value="P:lysine biosynthetic process via diaminopimelate"/>
    <property type="evidence" value="ECO:0007669"/>
    <property type="project" value="UniProtKB-UniRule"/>
</dbReference>
<dbReference type="FunFam" id="3.10.310.10:FF:000001">
    <property type="entry name" value="Diaminopimelate epimerase"/>
    <property type="match status" value="1"/>
</dbReference>
<dbReference type="Gene3D" id="3.10.310.10">
    <property type="entry name" value="Diaminopimelate Epimerase, Chain A, domain 1"/>
    <property type="match status" value="2"/>
</dbReference>
<dbReference type="HAMAP" id="MF_00197">
    <property type="entry name" value="DAP_epimerase"/>
    <property type="match status" value="1"/>
</dbReference>
<dbReference type="InterPro" id="IPR018510">
    <property type="entry name" value="DAP_epimerase_AS"/>
</dbReference>
<dbReference type="InterPro" id="IPR001653">
    <property type="entry name" value="DAP_epimerase_DapF"/>
</dbReference>
<dbReference type="NCBIfam" id="TIGR00652">
    <property type="entry name" value="DapF"/>
    <property type="match status" value="1"/>
</dbReference>
<dbReference type="PANTHER" id="PTHR31689:SF0">
    <property type="entry name" value="DIAMINOPIMELATE EPIMERASE"/>
    <property type="match status" value="1"/>
</dbReference>
<dbReference type="PANTHER" id="PTHR31689">
    <property type="entry name" value="DIAMINOPIMELATE EPIMERASE, CHLOROPLASTIC"/>
    <property type="match status" value="1"/>
</dbReference>
<dbReference type="Pfam" id="PF01678">
    <property type="entry name" value="DAP_epimerase"/>
    <property type="match status" value="2"/>
</dbReference>
<dbReference type="SUPFAM" id="SSF54506">
    <property type="entry name" value="Diaminopimelate epimerase-like"/>
    <property type="match status" value="1"/>
</dbReference>
<dbReference type="PROSITE" id="PS01326">
    <property type="entry name" value="DAP_EPIMERASE"/>
    <property type="match status" value="1"/>
</dbReference>
<evidence type="ECO:0000255" key="1">
    <source>
        <dbReference type="HAMAP-Rule" id="MF_00197"/>
    </source>
</evidence>
<organism>
    <name type="scientific">Ralstonia nicotianae (strain ATCC BAA-1114 / GMI1000)</name>
    <name type="common">Ralstonia solanacearum</name>
    <dbReference type="NCBI Taxonomy" id="267608"/>
    <lineage>
        <taxon>Bacteria</taxon>
        <taxon>Pseudomonadati</taxon>
        <taxon>Pseudomonadota</taxon>
        <taxon>Betaproteobacteria</taxon>
        <taxon>Burkholderiales</taxon>
        <taxon>Burkholderiaceae</taxon>
        <taxon>Ralstonia</taxon>
        <taxon>Ralstonia solanacearum species complex</taxon>
    </lineage>
</organism>
<accession>Q8Y344</accession>
<keyword id="KW-0028">Amino-acid biosynthesis</keyword>
<keyword id="KW-0963">Cytoplasm</keyword>
<keyword id="KW-0413">Isomerase</keyword>
<keyword id="KW-0457">Lysine biosynthesis</keyword>
<keyword id="KW-1185">Reference proteome</keyword>
<feature type="chain" id="PRO_0000149863" description="Diaminopimelate epimerase">
    <location>
        <begin position="1"/>
        <end position="292"/>
    </location>
</feature>
<feature type="active site" description="Proton donor" evidence="1">
    <location>
        <position position="75"/>
    </location>
</feature>
<feature type="active site" description="Proton acceptor" evidence="1">
    <location>
        <position position="226"/>
    </location>
</feature>
<feature type="binding site" evidence="1">
    <location>
        <position position="13"/>
    </location>
    <ligand>
        <name>substrate</name>
    </ligand>
</feature>
<feature type="binding site" evidence="1">
    <location>
        <position position="46"/>
    </location>
    <ligand>
        <name>substrate</name>
    </ligand>
</feature>
<feature type="binding site" evidence="1">
    <location>
        <position position="66"/>
    </location>
    <ligand>
        <name>substrate</name>
    </ligand>
</feature>
<feature type="binding site" evidence="1">
    <location>
        <begin position="76"/>
        <end position="77"/>
    </location>
    <ligand>
        <name>substrate</name>
    </ligand>
</feature>
<feature type="binding site" evidence="1">
    <location>
        <position position="166"/>
    </location>
    <ligand>
        <name>substrate</name>
    </ligand>
</feature>
<feature type="binding site" evidence="1">
    <location>
        <position position="199"/>
    </location>
    <ligand>
        <name>substrate</name>
    </ligand>
</feature>
<feature type="binding site" evidence="1">
    <location>
        <begin position="217"/>
        <end position="218"/>
    </location>
    <ligand>
        <name>substrate</name>
    </ligand>
</feature>
<feature type="binding site" evidence="1">
    <location>
        <begin position="227"/>
        <end position="228"/>
    </location>
    <ligand>
        <name>substrate</name>
    </ligand>
</feature>
<feature type="site" description="Could be important to modulate the pK values of the two catalytic cysteine residues" evidence="1">
    <location>
        <position position="168"/>
    </location>
</feature>
<feature type="site" description="Could be important to modulate the pK values of the two catalytic cysteine residues" evidence="1">
    <location>
        <position position="217"/>
    </location>
</feature>
<sequence>MKLHFTKMHGAGNDFVVLDGIATPIDFTPEQWRAIADRHFGVGADQLLLVERSTRPDVDFRYRIFNHDGGEVEQCGNGARCFVKFVTDRGLTDKRTIRVEVMNGISTLTMQPDGQVTVDMGAPVFEAARLPFVPDALPTRVEGRDTQHALQINGRTAWLSTVSMGNPHAVQVVDDAEAFPVREDGPLIESHAVFPRRVNAGFMEIADRHAIRLRVYERGAGETLACGTGACAAAVAGIRRGLLDSPVKVTTHGGDLTIAWAGEGEPVMMTGPATTVFEGTLDLDALKQTAAH</sequence>
<comment type="function">
    <text evidence="1">Catalyzes the stereoinversion of LL-2,6-diaminopimelate (L,L-DAP) to meso-diaminopimelate (meso-DAP), a precursor of L-lysine and an essential component of the bacterial peptidoglycan.</text>
</comment>
<comment type="catalytic activity">
    <reaction evidence="1">
        <text>(2S,6S)-2,6-diaminopimelate = meso-2,6-diaminopimelate</text>
        <dbReference type="Rhea" id="RHEA:15393"/>
        <dbReference type="ChEBI" id="CHEBI:57609"/>
        <dbReference type="ChEBI" id="CHEBI:57791"/>
        <dbReference type="EC" id="5.1.1.7"/>
    </reaction>
</comment>
<comment type="pathway">
    <text evidence="1">Amino-acid biosynthesis; L-lysine biosynthesis via DAP pathway; DL-2,6-diaminopimelate from LL-2,6-diaminopimelate: step 1/1.</text>
</comment>
<comment type="subunit">
    <text evidence="1">Homodimer.</text>
</comment>
<comment type="subcellular location">
    <subcellularLocation>
        <location evidence="1">Cytoplasm</location>
    </subcellularLocation>
</comment>
<comment type="similarity">
    <text evidence="1">Belongs to the diaminopimelate epimerase family.</text>
</comment>
<gene>
    <name evidence="1" type="primary">dapF</name>
    <name type="ordered locus">RSc0137</name>
    <name type="ORF">RS01049</name>
</gene>
<reference key="1">
    <citation type="journal article" date="2002" name="Nature">
        <title>Genome sequence of the plant pathogen Ralstonia solanacearum.</title>
        <authorList>
            <person name="Salanoubat M."/>
            <person name="Genin S."/>
            <person name="Artiguenave F."/>
            <person name="Gouzy J."/>
            <person name="Mangenot S."/>
            <person name="Arlat M."/>
            <person name="Billault A."/>
            <person name="Brottier P."/>
            <person name="Camus J.-C."/>
            <person name="Cattolico L."/>
            <person name="Chandler M."/>
            <person name="Choisne N."/>
            <person name="Claudel-Renard C."/>
            <person name="Cunnac S."/>
            <person name="Demange N."/>
            <person name="Gaspin C."/>
            <person name="Lavie M."/>
            <person name="Moisan A."/>
            <person name="Robert C."/>
            <person name="Saurin W."/>
            <person name="Schiex T."/>
            <person name="Siguier P."/>
            <person name="Thebault P."/>
            <person name="Whalen M."/>
            <person name="Wincker P."/>
            <person name="Levy M."/>
            <person name="Weissenbach J."/>
            <person name="Boucher C.A."/>
        </authorList>
    </citation>
    <scope>NUCLEOTIDE SEQUENCE [LARGE SCALE GENOMIC DNA]</scope>
    <source>
        <strain>ATCC BAA-1114 / GMI1000</strain>
    </source>
</reference>
<protein>
    <recommendedName>
        <fullName evidence="1">Diaminopimelate epimerase</fullName>
        <shortName evidence="1">DAP epimerase</shortName>
        <ecNumber evidence="1">5.1.1.7</ecNumber>
    </recommendedName>
    <alternativeName>
        <fullName evidence="1">PLP-independent amino acid racemase</fullName>
    </alternativeName>
</protein>
<name>DAPF_RALN1</name>
<proteinExistence type="inferred from homology"/>